<dbReference type="EMBL" id="AC007651">
    <property type="status" value="NOT_ANNOTATED_CDS"/>
    <property type="molecule type" value="Genomic_DNA"/>
</dbReference>
<dbReference type="EMBL" id="CP002684">
    <property type="protein sequence ID" value="AEE29547.1"/>
    <property type="molecule type" value="Genomic_DNA"/>
</dbReference>
<dbReference type="EMBL" id="CP002684">
    <property type="protein sequence ID" value="AEE29548.1"/>
    <property type="molecule type" value="Genomic_DNA"/>
</dbReference>
<dbReference type="EMBL" id="AY085543">
    <property type="protein sequence ID" value="AAM62767.1"/>
    <property type="molecule type" value="mRNA"/>
</dbReference>
<dbReference type="EMBL" id="BT024727">
    <property type="protein sequence ID" value="ABD59065.1"/>
    <property type="molecule type" value="mRNA"/>
</dbReference>
<dbReference type="EMBL" id="AK229284">
    <property type="protein sequence ID" value="BAF01147.1"/>
    <property type="molecule type" value="mRNA"/>
</dbReference>
<dbReference type="RefSeq" id="NP_564015.1">
    <property type="nucleotide sequence ID" value="NM_101574.3"/>
</dbReference>
<dbReference type="RefSeq" id="NP_973848.1">
    <property type="nucleotide sequence ID" value="NM_202119.2"/>
</dbReference>
<dbReference type="SMR" id="Q8LE98"/>
<dbReference type="BioGRID" id="23524">
    <property type="interactions" value="7"/>
</dbReference>
<dbReference type="FunCoup" id="Q8LE98">
    <property type="interactions" value="142"/>
</dbReference>
<dbReference type="STRING" id="3702.Q8LE98"/>
<dbReference type="iPTMnet" id="Q8LE98"/>
<dbReference type="PaxDb" id="3702-AT1G17140.1"/>
<dbReference type="ProteomicsDB" id="228767"/>
<dbReference type="EnsemblPlants" id="AT1G17140.1">
    <property type="protein sequence ID" value="AT1G17140.1"/>
    <property type="gene ID" value="AT1G17140"/>
</dbReference>
<dbReference type="EnsemblPlants" id="AT1G17140.2">
    <property type="protein sequence ID" value="AT1G17140.2"/>
    <property type="gene ID" value="AT1G17140"/>
</dbReference>
<dbReference type="GeneID" id="838284"/>
<dbReference type="Gramene" id="AT1G17140.1">
    <property type="protein sequence ID" value="AT1G17140.1"/>
    <property type="gene ID" value="AT1G17140"/>
</dbReference>
<dbReference type="Gramene" id="AT1G17140.2">
    <property type="protein sequence ID" value="AT1G17140.2"/>
    <property type="gene ID" value="AT1G17140"/>
</dbReference>
<dbReference type="KEGG" id="ath:AT1G17140"/>
<dbReference type="Araport" id="AT1G17140"/>
<dbReference type="TAIR" id="AT1G17140">
    <property type="gene designation" value="ICR1"/>
</dbReference>
<dbReference type="eggNOG" id="ENOG502QVSP">
    <property type="taxonomic scope" value="Eukaryota"/>
</dbReference>
<dbReference type="HOGENOM" id="CLU_043733_1_0_1"/>
<dbReference type="InParanoid" id="Q8LE98"/>
<dbReference type="OMA" id="MFGELWR"/>
<dbReference type="PhylomeDB" id="Q8LE98"/>
<dbReference type="PRO" id="PR:Q8LE98"/>
<dbReference type="Proteomes" id="UP000006548">
    <property type="component" value="Chromosome 1"/>
</dbReference>
<dbReference type="ExpressionAtlas" id="Q8LE98">
    <property type="expression patterns" value="baseline and differential"/>
</dbReference>
<dbReference type="GO" id="GO:0005634">
    <property type="term" value="C:nucleus"/>
    <property type="evidence" value="ECO:0000314"/>
    <property type="project" value="TAIR"/>
</dbReference>
<dbReference type="GO" id="GO:0005886">
    <property type="term" value="C:plasma membrane"/>
    <property type="evidence" value="ECO:0000314"/>
    <property type="project" value="TAIR"/>
</dbReference>
<dbReference type="GO" id="GO:0090404">
    <property type="term" value="C:pollen tube tip"/>
    <property type="evidence" value="ECO:0000314"/>
    <property type="project" value="TAIR"/>
</dbReference>
<dbReference type="GO" id="GO:2000012">
    <property type="term" value="P:regulation of auxin polar transport"/>
    <property type="evidence" value="ECO:0000315"/>
    <property type="project" value="TAIR"/>
</dbReference>
<dbReference type="InterPro" id="IPR029688">
    <property type="entry name" value="ICR"/>
</dbReference>
<dbReference type="PANTHER" id="PTHR34224">
    <property type="entry name" value="INTERACTOR OF CONSTITUTIVE ACTIVE ROPS 2, CHLOROPLASTIC-RELATED"/>
    <property type="match status" value="1"/>
</dbReference>
<dbReference type="PANTHER" id="PTHR34224:SF2">
    <property type="entry name" value="INTERACTOR OF CONSTITUTIVE ACTIVE ROPS 4"/>
    <property type="match status" value="1"/>
</dbReference>
<sequence>MPRPRVSELSQRQAPRLRSSSSTSDSNHSNRLITTDQSFKPGVDRKSPRSGGPNSDPLGQKKLGGRISDLESQLGQAQEELRLLKEQLANAEAVKKQAQDELHKKSKKPNPLARVEESATEAERIDRDEIPGDVQKETDVFEVPVEKIAVEEEELRSGNDEAEKLVAKEDEIKMLKARLYDMEKEHESLGKENESLKNQLSDSASEISNVKANEDEMVSKVSRIGEELEESRAKTAHLKEKLESMEEAKDALEAEMKKLRVQTEQWRKAADAAAAVLSGEFEMNGRDRSGSTEKYYAGGFFDPSAGFMDPPGMADDYDDGLGSGKRKSSGMKMFGELWRKKGQK</sequence>
<organism>
    <name type="scientific">Arabidopsis thaliana</name>
    <name type="common">Mouse-ear cress</name>
    <dbReference type="NCBI Taxonomy" id="3702"/>
    <lineage>
        <taxon>Eukaryota</taxon>
        <taxon>Viridiplantae</taxon>
        <taxon>Streptophyta</taxon>
        <taxon>Embryophyta</taxon>
        <taxon>Tracheophyta</taxon>
        <taxon>Spermatophyta</taxon>
        <taxon>Magnoliopsida</taxon>
        <taxon>eudicotyledons</taxon>
        <taxon>Gunneridae</taxon>
        <taxon>Pentapetalae</taxon>
        <taxon>rosids</taxon>
        <taxon>malvids</taxon>
        <taxon>Brassicales</taxon>
        <taxon>Brassicaceae</taxon>
        <taxon>Camelineae</taxon>
        <taxon>Arabidopsis</taxon>
    </lineage>
</organism>
<feature type="chain" id="PRO_0000220596" description="Interactor of constitutive active ROPs 1">
    <location>
        <begin position="1"/>
        <end position="344"/>
    </location>
</feature>
<feature type="region of interest" description="Disordered" evidence="2">
    <location>
        <begin position="1"/>
        <end position="74"/>
    </location>
</feature>
<feature type="region of interest" description="Disordered" evidence="2">
    <location>
        <begin position="92"/>
        <end position="139"/>
    </location>
</feature>
<feature type="region of interest" description="Disordered" evidence="2">
    <location>
        <begin position="186"/>
        <end position="218"/>
    </location>
</feature>
<feature type="region of interest" description="Disordered" evidence="2">
    <location>
        <begin position="307"/>
        <end position="344"/>
    </location>
</feature>
<feature type="coiled-coil region" evidence="1">
    <location>
        <begin position="60"/>
        <end position="108"/>
    </location>
</feature>
<feature type="coiled-coil region" evidence="1">
    <location>
        <begin position="145"/>
        <end position="273"/>
    </location>
</feature>
<feature type="compositionally biased region" description="Low complexity" evidence="2">
    <location>
        <begin position="19"/>
        <end position="29"/>
    </location>
</feature>
<feature type="compositionally biased region" description="Basic and acidic residues" evidence="2">
    <location>
        <begin position="93"/>
        <end position="103"/>
    </location>
</feature>
<feature type="compositionally biased region" description="Basic and acidic residues" evidence="2">
    <location>
        <begin position="114"/>
        <end position="139"/>
    </location>
</feature>
<feature type="compositionally biased region" description="Basic and acidic residues" evidence="2">
    <location>
        <begin position="186"/>
        <end position="195"/>
    </location>
</feature>
<feature type="compositionally biased region" description="Polar residues" evidence="2">
    <location>
        <begin position="196"/>
        <end position="211"/>
    </location>
</feature>
<feature type="mutagenesis site" description="Loss of oligomerization." evidence="3">
    <location>
        <begin position="78"/>
        <end position="81"/>
    </location>
</feature>
<feature type="mutagenesis site" description="Loss of oligomerization, loss of interaction with ROPs and loss of plasma membrane localization." evidence="3">
    <location>
        <begin position="265"/>
        <end position="270"/>
    </location>
</feature>
<feature type="mutagenesis site" description="No visible phenotype; when associated with P-270." evidence="3">
    <original>Q</original>
    <variation>P</variation>
    <location>
        <position position="265"/>
    </location>
</feature>
<feature type="mutagenesis site" description="Loss of plasma membrane localization, but stays in the nucleus; when associated with G-266." evidence="3">
    <original>Q</original>
    <variation>R</variation>
    <location>
        <position position="265"/>
    </location>
</feature>
<feature type="mutagenesis site" description="Loss of plasma membrane localization, but stays in the nucleus; when associated with R-265.">
    <original>W</original>
    <variation>G</variation>
    <location>
        <position position="266"/>
    </location>
</feature>
<feature type="mutagenesis site" description="No visible phenotype; when associated with P-265." evidence="3">
    <original>A</original>
    <variation>P</variation>
    <location>
        <position position="270"/>
    </location>
</feature>
<feature type="mutagenesis site" description="No effect on interaction with ROPs but loss of plasma membrane localization." evidence="4">
    <location>
        <begin position="340"/>
        <end position="344"/>
    </location>
</feature>
<feature type="mutagenesis site" description="Localization greatly shifted to the cytosol; when associated with E-344." evidence="4">
    <original>K</original>
    <variation>E</variation>
    <location>
        <position position="341"/>
    </location>
</feature>
<feature type="mutagenesis site" description="No effect on the plasma membrane localization, but decreased growth depolarization. Localization greatly shifted to the cytosol; when associated with E-341." evidence="4">
    <original>K</original>
    <variation>E</variation>
    <location>
        <position position="344"/>
    </location>
</feature>
<feature type="sequence conflict" description="In Ref. 5; BAF01147." evidence="7" ref="5">
    <original>I</original>
    <variation>V</variation>
    <location>
        <position position="125"/>
    </location>
</feature>
<name>ICR1_ARATH</name>
<keyword id="KW-1003">Cell membrane</keyword>
<keyword id="KW-0175">Coiled coil</keyword>
<keyword id="KW-0472">Membrane</keyword>
<keyword id="KW-0539">Nucleus</keyword>
<keyword id="KW-1185">Reference proteome</keyword>
<reference key="1">
    <citation type="journal article" date="2000" name="Nature">
        <title>Sequence and analysis of chromosome 1 of the plant Arabidopsis thaliana.</title>
        <authorList>
            <person name="Theologis A."/>
            <person name="Ecker J.R."/>
            <person name="Palm C.J."/>
            <person name="Federspiel N.A."/>
            <person name="Kaul S."/>
            <person name="White O."/>
            <person name="Alonso J."/>
            <person name="Altafi H."/>
            <person name="Araujo R."/>
            <person name="Bowman C.L."/>
            <person name="Brooks S.Y."/>
            <person name="Buehler E."/>
            <person name="Chan A."/>
            <person name="Chao Q."/>
            <person name="Chen H."/>
            <person name="Cheuk R.F."/>
            <person name="Chin C.W."/>
            <person name="Chung M.K."/>
            <person name="Conn L."/>
            <person name="Conway A.B."/>
            <person name="Conway A.R."/>
            <person name="Creasy T.H."/>
            <person name="Dewar K."/>
            <person name="Dunn P."/>
            <person name="Etgu P."/>
            <person name="Feldblyum T.V."/>
            <person name="Feng J.-D."/>
            <person name="Fong B."/>
            <person name="Fujii C.Y."/>
            <person name="Gill J.E."/>
            <person name="Goldsmith A.D."/>
            <person name="Haas B."/>
            <person name="Hansen N.F."/>
            <person name="Hughes B."/>
            <person name="Huizar L."/>
            <person name="Hunter J.L."/>
            <person name="Jenkins J."/>
            <person name="Johnson-Hopson C."/>
            <person name="Khan S."/>
            <person name="Khaykin E."/>
            <person name="Kim C.J."/>
            <person name="Koo H.L."/>
            <person name="Kremenetskaia I."/>
            <person name="Kurtz D.B."/>
            <person name="Kwan A."/>
            <person name="Lam B."/>
            <person name="Langin-Hooper S."/>
            <person name="Lee A."/>
            <person name="Lee J.M."/>
            <person name="Lenz C.A."/>
            <person name="Li J.H."/>
            <person name="Li Y.-P."/>
            <person name="Lin X."/>
            <person name="Liu S.X."/>
            <person name="Liu Z.A."/>
            <person name="Luros J.S."/>
            <person name="Maiti R."/>
            <person name="Marziali A."/>
            <person name="Militscher J."/>
            <person name="Miranda M."/>
            <person name="Nguyen M."/>
            <person name="Nierman W.C."/>
            <person name="Osborne B.I."/>
            <person name="Pai G."/>
            <person name="Peterson J."/>
            <person name="Pham P.K."/>
            <person name="Rizzo M."/>
            <person name="Rooney T."/>
            <person name="Rowley D."/>
            <person name="Sakano H."/>
            <person name="Salzberg S.L."/>
            <person name="Schwartz J.R."/>
            <person name="Shinn P."/>
            <person name="Southwick A.M."/>
            <person name="Sun H."/>
            <person name="Tallon L.J."/>
            <person name="Tambunga G."/>
            <person name="Toriumi M.J."/>
            <person name="Town C.D."/>
            <person name="Utterback T."/>
            <person name="Van Aken S."/>
            <person name="Vaysberg M."/>
            <person name="Vysotskaia V.S."/>
            <person name="Walker M."/>
            <person name="Wu D."/>
            <person name="Yu G."/>
            <person name="Fraser C.M."/>
            <person name="Venter J.C."/>
            <person name="Davis R.W."/>
        </authorList>
    </citation>
    <scope>NUCLEOTIDE SEQUENCE [LARGE SCALE GENOMIC DNA]</scope>
    <source>
        <strain>cv. Columbia</strain>
    </source>
</reference>
<reference key="2">
    <citation type="journal article" date="2017" name="Plant J.">
        <title>Araport11: a complete reannotation of the Arabidopsis thaliana reference genome.</title>
        <authorList>
            <person name="Cheng C.Y."/>
            <person name="Krishnakumar V."/>
            <person name="Chan A.P."/>
            <person name="Thibaud-Nissen F."/>
            <person name="Schobel S."/>
            <person name="Town C.D."/>
        </authorList>
    </citation>
    <scope>GENOME REANNOTATION</scope>
    <source>
        <strain>cv. Columbia</strain>
    </source>
</reference>
<reference key="3">
    <citation type="submission" date="2002-03" db="EMBL/GenBank/DDBJ databases">
        <title>Full-length cDNA from Arabidopsis thaliana.</title>
        <authorList>
            <person name="Brover V.V."/>
            <person name="Troukhan M.E."/>
            <person name="Alexandrov N.A."/>
            <person name="Lu Y.-P."/>
            <person name="Flavell R.B."/>
            <person name="Feldmann K.A."/>
        </authorList>
    </citation>
    <scope>NUCLEOTIDE SEQUENCE [LARGE SCALE MRNA]</scope>
</reference>
<reference key="4">
    <citation type="submission" date="2006-03" db="EMBL/GenBank/DDBJ databases">
        <title>Arabidopsis ORF clones.</title>
        <authorList>
            <person name="Shinn P."/>
            <person name="Chen H."/>
            <person name="Kim C.J."/>
            <person name="Ecker J.R."/>
        </authorList>
    </citation>
    <scope>NUCLEOTIDE SEQUENCE [LARGE SCALE MRNA]</scope>
    <source>
        <strain>cv. Columbia</strain>
    </source>
</reference>
<reference key="5">
    <citation type="submission" date="2006-07" db="EMBL/GenBank/DDBJ databases">
        <title>Large-scale analysis of RIKEN Arabidopsis full-length (RAFL) cDNAs.</title>
        <authorList>
            <person name="Totoki Y."/>
            <person name="Seki M."/>
            <person name="Ishida J."/>
            <person name="Nakajima M."/>
            <person name="Enju A."/>
            <person name="Kamiya A."/>
            <person name="Narusaka M."/>
            <person name="Shin-i T."/>
            <person name="Nakagawa M."/>
            <person name="Sakamoto N."/>
            <person name="Oishi K."/>
            <person name="Kohara Y."/>
            <person name="Kobayashi M."/>
            <person name="Toyoda A."/>
            <person name="Sakaki Y."/>
            <person name="Sakurai T."/>
            <person name="Iida K."/>
            <person name="Akiyama K."/>
            <person name="Satou M."/>
            <person name="Toyoda T."/>
            <person name="Konagaya A."/>
            <person name="Carninci P."/>
            <person name="Kawai J."/>
            <person name="Hayashizaki Y."/>
            <person name="Shinozaki K."/>
        </authorList>
    </citation>
    <scope>NUCLEOTIDE SEQUENCE [LARGE SCALE MRNA]</scope>
    <source>
        <strain>cv. Columbia</strain>
    </source>
</reference>
<reference key="6">
    <citation type="journal article" date="2007" name="Curr. Biol.">
        <title>A Novel ROP/RAC effector links cell polarity, root-meristem maintenance, and vesicle trafficking.</title>
        <authorList>
            <person name="Lavy M."/>
            <person name="Bloch D."/>
            <person name="Hazak O."/>
            <person name="Gutman I."/>
            <person name="Poraty L."/>
            <person name="Sorek N."/>
            <person name="Sternberg H."/>
            <person name="Yalovsky S."/>
        </authorList>
    </citation>
    <scope>IDENTIFICATION</scope>
    <scope>FUNCTION</scope>
    <scope>MUTAGENESIS OF 78-GLN--LEU-81; GLN-265; 265-GLN--ALA-270 AND ALA-270</scope>
    <scope>INTERACTION WITH ARAC3; ARAC8; SEC3A; ICR2 AND EXO70A1</scope>
    <scope>DISRUPTION PHENOTYPE</scope>
    <scope>SUBCELLULAR LOCATION</scope>
</reference>
<reference key="7">
    <citation type="journal article" date="2008" name="Mol. Plant">
        <title>RIP1 (ROP Interactive Partner 1)/ICR1 marks pollen germination sites and may act in the ROP1 pathway in the control of polarized pollen growth.</title>
        <authorList>
            <person name="Li S."/>
            <person name="Gu Y."/>
            <person name="Yan A."/>
            <person name="Lord E."/>
            <person name="Yang Z.B."/>
        </authorList>
    </citation>
    <scope>FUNCTION</scope>
    <scope>INTERACTION WITH ARAC11</scope>
    <scope>SUBCELLULAR LOCATION</scope>
    <scope>TISSUE SPECIFICITY</scope>
    <scope>MUTAGENESIS OF 265-GLN-TRP-266; 340-LYS--LYS-344; LYS-341 AND LYS-344</scope>
    <scope>GENE FAMILY</scope>
    <scope>NOMENCLATURE</scope>
</reference>
<reference key="8">
    <citation type="journal article" date="2010" name="Eur. J. Cell Biol.">
        <title>RIP3 and AtKinesin-13A - a novel interaction linking Rho proteins of plants to microtubules.</title>
        <authorList>
            <person name="Mucha E."/>
            <person name="Hoefle C."/>
            <person name="Huckelhoven R."/>
            <person name="Berken A."/>
        </authorList>
    </citation>
    <scope>INTERACTION WITH SEC3A; ARAC4 AND ARAC11</scope>
</reference>
<reference key="9">
    <citation type="journal article" date="2010" name="PLoS Biol.">
        <title>A rho scaffold integrates the secretory system with feedback mechanisms in regulation of auxin distribution.</title>
        <authorList>
            <person name="Hazak O."/>
            <person name="Bloch D."/>
            <person name="Poraty L."/>
            <person name="Sternberg H."/>
            <person name="Zhang J."/>
            <person name="Friml J."/>
            <person name="Yalovsky S."/>
        </authorList>
    </citation>
    <scope>FUNCTION</scope>
    <scope>TISSUE SPECIFICITY</scope>
    <scope>INDUCTION BY AUXIN</scope>
    <scope>SUBCELLULAR LOCATION</scope>
</reference>
<proteinExistence type="evidence at protein level"/>
<accession>Q8LE98</accession>
<accession>Q0WP02</accession>
<accession>Q29Q29</accession>
<gene>
    <name type="primary">ICR1</name>
    <name type="synonym">RIP1</name>
    <name type="ordered locus">At1g17140</name>
    <name type="ORF">F20D23.32</name>
    <name type="ORF">F20D23_31</name>
</gene>
<protein>
    <recommendedName>
        <fullName>Interactor of constitutive active ROPs 1</fullName>
    </recommendedName>
    <alternativeName>
        <fullName>ROP-interactive partner 1</fullName>
    </alternativeName>
</protein>
<evidence type="ECO:0000255" key="1"/>
<evidence type="ECO:0000256" key="2">
    <source>
        <dbReference type="SAM" id="MobiDB-lite"/>
    </source>
</evidence>
<evidence type="ECO:0000269" key="3">
    <source>
    </source>
</evidence>
<evidence type="ECO:0000269" key="4">
    <source>
    </source>
</evidence>
<evidence type="ECO:0000269" key="5">
    <source>
    </source>
</evidence>
<evidence type="ECO:0000269" key="6">
    <source>
    </source>
</evidence>
<evidence type="ECO:0000305" key="7"/>
<comment type="function">
    <text evidence="3 4 5">Acts as a scaffold, mediating interaction of ROPs with different proteins. Required for primary and adventitious root maintenance, but not for their formation. Promotes the stabilization of ARAC11 on the plasma membrane of the pollen tube initiation site but not the activation of ARAC11. Regulates directionality of polar auxin transport, and is required for the formation of a stable auxin maximum and tip localized auxin gradient during embryogenesis, organogenesis, and meristem activity. Involved in exocytosis and in the recycling of PIN proteins back to the plasma membrane.</text>
</comment>
<comment type="subunit">
    <text evidence="3 4 6">Homooligomer. Interacts with ARAC3, ARAC4, ARAC8, ARAC11 and SEC3A, but not with ICR2 or EXO70A1.</text>
</comment>
<comment type="subcellular location">
    <subcellularLocation>
        <location evidence="3 5">Cell membrane</location>
        <topology>Peripheral membrane protein</topology>
    </subcellularLocation>
    <subcellularLocation>
        <location evidence="4">Nucleus</location>
    </subcellularLocation>
    <text evidence="3 4">The localization of the ICR1-ROP complexes at the plasma membrane depend on the lipid modifications of the ROPs (PubMed:17493810). Localized in the nuclei in mature pollen, then shifts to the site of germination and stays at the apical cortex of growing pollen tubes (PubMed:19825600).</text>
</comment>
<comment type="tissue specificity">
    <text evidence="4 5">Expressed in mature and germinating pollen (PubMed:19825600). Expressed throughout the embryo but not in the hypophysis and quiescent center (QC). In roots, absent from the QC and the stem cells (PubMed:20098722).</text>
</comment>
<comment type="induction">
    <text evidence="5">Up-regulated by auxin.</text>
</comment>
<comment type="domain">
    <text>Interactions with ROPs and SEC3A require an intact C-terminal coiled-coil domain.</text>
</comment>
<comment type="disruption phenotype">
    <text evidence="3">Plants have cubical adaxial epidermal pavement cells and show a loss of root stem-cell population due to a colapse of the root meristem. Pollen development is also compromised.</text>
</comment>
<comment type="similarity">
    <text evidence="7">Belongs to the ICR family.</text>
</comment>